<name>YHEU_SHIF8</name>
<organism>
    <name type="scientific">Shigella flexneri serotype 5b (strain 8401)</name>
    <dbReference type="NCBI Taxonomy" id="373384"/>
    <lineage>
        <taxon>Bacteria</taxon>
        <taxon>Pseudomonadati</taxon>
        <taxon>Pseudomonadota</taxon>
        <taxon>Gammaproteobacteria</taxon>
        <taxon>Enterobacterales</taxon>
        <taxon>Enterobacteriaceae</taxon>
        <taxon>Shigella</taxon>
    </lineage>
</organism>
<gene>
    <name evidence="1" type="primary">yheU</name>
    <name type="ordered locus">SFV_3360</name>
</gene>
<sequence length="72" mass="8430">MWIPWQDLSPVTLENLIESFVLREGTDYGEHERTLEQKVADVKRQLQCGEAVLVCSELHETVNIMPRSQFRE</sequence>
<reference key="1">
    <citation type="journal article" date="2006" name="BMC Genomics">
        <title>Complete genome sequence of Shigella flexneri 5b and comparison with Shigella flexneri 2a.</title>
        <authorList>
            <person name="Nie H."/>
            <person name="Yang F."/>
            <person name="Zhang X."/>
            <person name="Yang J."/>
            <person name="Chen L."/>
            <person name="Wang J."/>
            <person name="Xiong Z."/>
            <person name="Peng J."/>
            <person name="Sun L."/>
            <person name="Dong J."/>
            <person name="Xue Y."/>
            <person name="Xu X."/>
            <person name="Chen S."/>
            <person name="Yao Z."/>
            <person name="Shen Y."/>
            <person name="Jin Q."/>
        </authorList>
    </citation>
    <scope>NUCLEOTIDE SEQUENCE [LARGE SCALE GENOMIC DNA]</scope>
    <source>
        <strain>8401</strain>
    </source>
</reference>
<proteinExistence type="inferred from homology"/>
<comment type="similarity">
    <text evidence="1">Belongs to the UPF0270 family.</text>
</comment>
<evidence type="ECO:0000255" key="1">
    <source>
        <dbReference type="HAMAP-Rule" id="MF_00690"/>
    </source>
</evidence>
<protein>
    <recommendedName>
        <fullName evidence="1">UPF0270 protein YheU</fullName>
    </recommendedName>
</protein>
<accession>Q0SZW2</accession>
<dbReference type="EMBL" id="CP000266">
    <property type="protein sequence ID" value="ABF05403.1"/>
    <property type="molecule type" value="Genomic_DNA"/>
</dbReference>
<dbReference type="RefSeq" id="WP_000264963.1">
    <property type="nucleotide sequence ID" value="NC_008258.1"/>
</dbReference>
<dbReference type="SMR" id="Q0SZW2"/>
<dbReference type="KEGG" id="sfv:SFV_3360"/>
<dbReference type="HOGENOM" id="CLU_186759_1_0_6"/>
<dbReference type="Proteomes" id="UP000000659">
    <property type="component" value="Chromosome"/>
</dbReference>
<dbReference type="Gene3D" id="1.10.10.610">
    <property type="entry name" value="YehU-like"/>
    <property type="match status" value="1"/>
</dbReference>
<dbReference type="HAMAP" id="MF_00690">
    <property type="entry name" value="UPF0270"/>
    <property type="match status" value="1"/>
</dbReference>
<dbReference type="InterPro" id="IPR010648">
    <property type="entry name" value="UPF0270"/>
</dbReference>
<dbReference type="InterPro" id="IPR036685">
    <property type="entry name" value="YehU-like_sf"/>
</dbReference>
<dbReference type="NCBIfam" id="NF003438">
    <property type="entry name" value="PRK04966.1"/>
    <property type="match status" value="1"/>
</dbReference>
<dbReference type="Pfam" id="PF06794">
    <property type="entry name" value="UPF0270"/>
    <property type="match status" value="1"/>
</dbReference>
<dbReference type="PIRSF" id="PIRSF006169">
    <property type="entry name" value="UCP006169"/>
    <property type="match status" value="1"/>
</dbReference>
<dbReference type="SUPFAM" id="SSF118001">
    <property type="entry name" value="YehU-like"/>
    <property type="match status" value="1"/>
</dbReference>
<feature type="chain" id="PRO_1000045176" description="UPF0270 protein YheU">
    <location>
        <begin position="1"/>
        <end position="72"/>
    </location>
</feature>